<evidence type="ECO:0000255" key="1"/>
<evidence type="ECO:0000305" key="2"/>
<name>Y072_OSHVF</name>
<protein>
    <recommendedName>
        <fullName>Uncharacterized protein ORF72</fullName>
    </recommendedName>
</protein>
<accession>Q6R7F6</accession>
<sequence>MATDQQDLDIISSTAELRGACDFWETRSGGVTTITITRINRDAIVLLAGVCPGESFSVSYNKEKILVNSYPFNINNVDVVGGTTDINDFNSKMKSLYLPVNGMTVLMLTEGRINNPEIAVVTEDGNLEVVGSKKKTLVKLLLLFLSLMVVIVGVWWKYFSTSELSASALFDTVGQSVKSKGNYEDLFK</sequence>
<keyword id="KW-1043">Host membrane</keyword>
<keyword id="KW-0472">Membrane</keyword>
<keyword id="KW-1185">Reference proteome</keyword>
<keyword id="KW-0812">Transmembrane</keyword>
<keyword id="KW-1133">Transmembrane helix</keyword>
<proteinExistence type="predicted"/>
<gene>
    <name type="ORF">ORF72</name>
</gene>
<dbReference type="EMBL" id="AY509253">
    <property type="protein sequence ID" value="AAS00959.1"/>
    <property type="molecule type" value="Genomic_DNA"/>
</dbReference>
<dbReference type="RefSeq" id="YP_024612.1">
    <property type="nucleotide sequence ID" value="NC_005881.2"/>
</dbReference>
<dbReference type="SMR" id="Q6R7F6"/>
<dbReference type="KEGG" id="vg:2948265"/>
<dbReference type="Proteomes" id="UP000007021">
    <property type="component" value="Segment"/>
</dbReference>
<dbReference type="GO" id="GO:0033644">
    <property type="term" value="C:host cell membrane"/>
    <property type="evidence" value="ECO:0007669"/>
    <property type="project" value="UniProtKB-SubCell"/>
</dbReference>
<dbReference type="GO" id="GO:0016020">
    <property type="term" value="C:membrane"/>
    <property type="evidence" value="ECO:0007669"/>
    <property type="project" value="UniProtKB-KW"/>
</dbReference>
<reference key="1">
    <citation type="journal article" date="2005" name="J. Gen. Virol.">
        <title>A novel class of herpesvirus with bivalve hosts.</title>
        <authorList>
            <person name="Davison A.J."/>
            <person name="Trus B.L."/>
            <person name="Cheng N."/>
            <person name="Steven A.C."/>
            <person name="Watson M.S."/>
            <person name="Cunningham C."/>
            <person name="Le Deuff R.M."/>
            <person name="Renault T."/>
        </authorList>
    </citation>
    <scope>NUCLEOTIDE SEQUENCE [LARGE SCALE GENOMIC DNA]</scope>
</reference>
<organismHost>
    <name type="scientific">Magallana gigas</name>
    <name type="common">Pacific oyster</name>
    <name type="synonym">Crassostrea gigas</name>
    <dbReference type="NCBI Taxonomy" id="29159"/>
</organismHost>
<organismHost>
    <name type="scientific">Pecten maximus</name>
    <name type="common">King scallop</name>
    <name type="synonym">Pilgrim's clam</name>
    <dbReference type="NCBI Taxonomy" id="6579"/>
</organismHost>
<feature type="chain" id="PRO_0000385094" description="Uncharacterized protein ORF72">
    <location>
        <begin position="1"/>
        <end position="188"/>
    </location>
</feature>
<feature type="transmembrane region" description="Helical" evidence="1">
    <location>
        <begin position="136"/>
        <end position="156"/>
    </location>
</feature>
<organism>
    <name type="scientific">Ostreid herpesvirus 1 (isolate France)</name>
    <name type="common">OsHV-1</name>
    <name type="synonym">Pacific oyster herpesvirus</name>
    <dbReference type="NCBI Taxonomy" id="654903"/>
    <lineage>
        <taxon>Viruses</taxon>
        <taxon>Duplodnaviria</taxon>
        <taxon>Heunggongvirae</taxon>
        <taxon>Peploviricota</taxon>
        <taxon>Herviviricetes</taxon>
        <taxon>Herpesvirales</taxon>
        <taxon>Malacoherpesviridae</taxon>
        <taxon>Ostreavirus</taxon>
        <taxon>Ostreavirus ostreidmalaco1</taxon>
        <taxon>Ostreid herpesvirus 1</taxon>
    </lineage>
</organism>
<comment type="subcellular location">
    <subcellularLocation>
        <location evidence="2">Host membrane</location>
        <topology evidence="2">Single-pass membrane protein</topology>
    </subcellularLocation>
</comment>